<accession>Q5PXT2</accession>
<sequence>MAKVAKDLNPGVQKMSLGQQQSARGVPCLRCKGTCSGFEPHSWRKICKSCKCSQEDHFLSSDLEDDRKIGRLLMDSKYSTLTARVKGGDGIRIYKRNRMIMTNPIATGKDPTFDTITYEWAPPGVTQKLGLQYMELIPKEKQPVTGTEGAYYRRRQLMHQLPIYDQDPSRCRGLLESELKVMEEFVKQYKSEALGVGEVALPGQGGLPKEEGKQQEKPEGAETAAPTANGSLGDPSKEYVCELCKGVAPADSPVVYSDRAGYSKQWHPACFVCAKCSEPLVDLIYFWKDGAPWCGRHYCESLRPRCSGCDEIIFSEDYQRVEDLAWHRKHFVCEGCEQQLGGRAYIITKGQLLCPTCSKSKRT</sequence>
<gene>
    <name type="primary">LMCD1</name>
</gene>
<feature type="chain" id="PRO_0000265102" description="LIM and cysteine-rich domains protein 1">
    <location>
        <begin position="1"/>
        <end position="363"/>
    </location>
</feature>
<feature type="domain" description="PET" evidence="4">
    <location>
        <begin position="99"/>
        <end position="206"/>
    </location>
</feature>
<feature type="domain" description="LIM zinc-binding 1" evidence="3">
    <location>
        <begin position="239"/>
        <end position="304"/>
    </location>
</feature>
<feature type="domain" description="LIM zinc-binding 2" evidence="3">
    <location>
        <begin position="305"/>
        <end position="363"/>
    </location>
</feature>
<feature type="region of interest" description="Disordered" evidence="5">
    <location>
        <begin position="200"/>
        <end position="233"/>
    </location>
</feature>
<feature type="compositionally biased region" description="Basic and acidic residues" evidence="5">
    <location>
        <begin position="208"/>
        <end position="220"/>
    </location>
</feature>
<feature type="modified residue" description="Phosphoserine" evidence="2">
    <location>
        <position position="16"/>
    </location>
</feature>
<proteinExistence type="evidence at transcript level"/>
<keyword id="KW-0963">Cytoplasm</keyword>
<keyword id="KW-0440">LIM domain</keyword>
<keyword id="KW-0479">Metal-binding</keyword>
<keyword id="KW-0539">Nucleus</keyword>
<keyword id="KW-0597">Phosphoprotein</keyword>
<keyword id="KW-1185">Reference proteome</keyword>
<keyword id="KW-0677">Repeat</keyword>
<keyword id="KW-0678">Repressor</keyword>
<keyword id="KW-0804">Transcription</keyword>
<keyword id="KW-0805">Transcription regulation</keyword>
<keyword id="KW-0862">Zinc</keyword>
<evidence type="ECO:0000250" key="1"/>
<evidence type="ECO:0000250" key="2">
    <source>
        <dbReference type="UniProtKB" id="Q9NZU5"/>
    </source>
</evidence>
<evidence type="ECO:0000255" key="3">
    <source>
        <dbReference type="PROSITE-ProRule" id="PRU00125"/>
    </source>
</evidence>
<evidence type="ECO:0000255" key="4">
    <source>
        <dbReference type="PROSITE-ProRule" id="PRU00636"/>
    </source>
</evidence>
<evidence type="ECO:0000256" key="5">
    <source>
        <dbReference type="SAM" id="MobiDB-lite"/>
    </source>
</evidence>
<evidence type="ECO:0000269" key="6">
    <source>
    </source>
</evidence>
<name>LMCD1_PIG</name>
<comment type="function">
    <text evidence="1">Transcriptional cofactor that restricts GATA6 function by inhibiting DNA-binding, resulting in repression of GATA6 transcriptional activation of downstream target genes. Represses GATA6-mediated trans activation of lung- and cardiac tissue-specific promoters. Inhibits DNA-binding by GATA4 and GATA1 to the cTNC promoter. Plays a critical role in the development of cardiac hypertrophy via activation of calcineurin/nuclear factor of activated T-cells signaling pathway (By similarity).</text>
</comment>
<comment type="subunit">
    <text evidence="1">Interacts with beta-dystroglycan. Interacts with GATA1, GATA4 and GATA6 (By similarity).</text>
</comment>
<comment type="subcellular location">
    <subcellularLocation>
        <location evidence="1">Cytoplasm</location>
    </subcellularLocation>
    <subcellularLocation>
        <location evidence="1">Nucleus</location>
    </subcellularLocation>
    <text evidence="1">May shuttle between the cytoplasm and the nucleus.</text>
</comment>
<comment type="tissue specificity">
    <text evidence="6">Highly expressed in both skeletal muscle and cardiac muscle.</text>
</comment>
<comment type="domain">
    <text evidence="1">The LIM zinc-binding domains and the Cys-rich region mediate interaction with GATA6.</text>
</comment>
<protein>
    <recommendedName>
        <fullName>LIM and cysteine-rich domains protein 1</fullName>
    </recommendedName>
</protein>
<reference key="1">
    <citation type="journal article" date="2005" name="Acta Biochim. Biophys. Sin.">
        <title>cDNA cloning, sequence analysis of the porcine LIM and cysteine-rich domain 1 gene.</title>
        <authorList>
            <person name="Wang J."/>
            <person name="Deng C.Y."/>
            <person name="Xiong Y.Z."/>
            <person name="Zuo B."/>
            <person name="Xing L."/>
            <person name="Li F.E."/>
            <person name="Lei M.G."/>
            <person name="Zheng R."/>
            <person name="Jiang S.W."/>
        </authorList>
    </citation>
    <scope>NUCLEOTIDE SEQUENCE [MRNA]</scope>
    <scope>TISSUE SPECIFICITY</scope>
</reference>
<dbReference type="EMBL" id="AY821789">
    <property type="protein sequence ID" value="AAV70654.1"/>
    <property type="molecule type" value="mRNA"/>
</dbReference>
<dbReference type="RefSeq" id="NP_001008692.1">
    <property type="nucleotide sequence ID" value="NM_001008692.1"/>
</dbReference>
<dbReference type="FunCoup" id="Q5PXT2">
    <property type="interactions" value="214"/>
</dbReference>
<dbReference type="STRING" id="9823.ENSSSCP00000060420"/>
<dbReference type="PaxDb" id="9823-ENSSSCP00000012297"/>
<dbReference type="PeptideAtlas" id="Q5PXT2"/>
<dbReference type="Ensembl" id="ENSSSCT00015051691.1">
    <property type="protein sequence ID" value="ENSSSCP00015020610.1"/>
    <property type="gene ID" value="ENSSSCG00015038849.1"/>
</dbReference>
<dbReference type="Ensembl" id="ENSSSCT00025010180.1">
    <property type="protein sequence ID" value="ENSSSCP00025004069.1"/>
    <property type="gene ID" value="ENSSSCG00025007594.1"/>
</dbReference>
<dbReference type="Ensembl" id="ENSSSCT00030057456.1">
    <property type="protein sequence ID" value="ENSSSCP00030026092.1"/>
    <property type="gene ID" value="ENSSSCG00030041369.1"/>
</dbReference>
<dbReference type="Ensembl" id="ENSSSCT00035031849.1">
    <property type="protein sequence ID" value="ENSSSCP00035012509.1"/>
    <property type="gene ID" value="ENSSSCG00035024215.1"/>
</dbReference>
<dbReference type="Ensembl" id="ENSSSCT00040045681.1">
    <property type="protein sequence ID" value="ENSSSCP00040019153.1"/>
    <property type="gene ID" value="ENSSSCG00040033943.1"/>
</dbReference>
<dbReference type="Ensembl" id="ENSSSCT00045029952.1">
    <property type="protein sequence ID" value="ENSSSCP00045020760.1"/>
    <property type="gene ID" value="ENSSSCG00045017376.1"/>
</dbReference>
<dbReference type="Ensembl" id="ENSSSCT00050033057.1">
    <property type="protein sequence ID" value="ENSSSCP00050013768.1"/>
    <property type="gene ID" value="ENSSSCG00050024517.1"/>
</dbReference>
<dbReference type="Ensembl" id="ENSSSCT00055060507.1">
    <property type="protein sequence ID" value="ENSSSCP00055048470.1"/>
    <property type="gene ID" value="ENSSSCG00055030407.1"/>
</dbReference>
<dbReference type="Ensembl" id="ENSSSCT00060068489.1">
    <property type="protein sequence ID" value="ENSSSCP00060029431.1"/>
    <property type="gene ID" value="ENSSSCG00060050314.1"/>
</dbReference>
<dbReference type="Ensembl" id="ENSSSCT00065061058.1">
    <property type="protein sequence ID" value="ENSSSCP00065026445.1"/>
    <property type="gene ID" value="ENSSSCG00065044614.1"/>
</dbReference>
<dbReference type="Ensembl" id="ENSSSCT00070041799.1">
    <property type="protein sequence ID" value="ENSSSCP00070035102.1"/>
    <property type="gene ID" value="ENSSSCG00070021039.1"/>
</dbReference>
<dbReference type="Ensembl" id="ENSSSCT00105070399">
    <property type="protein sequence ID" value="ENSSSCP00105049857"/>
    <property type="gene ID" value="ENSSSCG00105036824"/>
</dbReference>
<dbReference type="Ensembl" id="ENSSSCT00115026794">
    <property type="protein sequence ID" value="ENSSSCP00115025396"/>
    <property type="gene ID" value="ENSSSCG00115015342"/>
</dbReference>
<dbReference type="GeneID" id="494020"/>
<dbReference type="KEGG" id="ssc:494020"/>
<dbReference type="CTD" id="29995"/>
<dbReference type="eggNOG" id="KOG1704">
    <property type="taxonomic scope" value="Eukaryota"/>
</dbReference>
<dbReference type="HOGENOM" id="CLU_008937_1_0_1"/>
<dbReference type="InParanoid" id="Q5PXT2"/>
<dbReference type="OMA" id="HDALWHP"/>
<dbReference type="OrthoDB" id="10069167at2759"/>
<dbReference type="Reactome" id="R-SSC-5683826">
    <property type="pathway name" value="Surfactant metabolism"/>
</dbReference>
<dbReference type="Proteomes" id="UP000008227">
    <property type="component" value="Unplaced"/>
</dbReference>
<dbReference type="Proteomes" id="UP000314985">
    <property type="component" value="Chromosome 13"/>
</dbReference>
<dbReference type="Proteomes" id="UP000694570">
    <property type="component" value="Unplaced"/>
</dbReference>
<dbReference type="Proteomes" id="UP000694571">
    <property type="component" value="Unplaced"/>
</dbReference>
<dbReference type="Proteomes" id="UP000694720">
    <property type="component" value="Unplaced"/>
</dbReference>
<dbReference type="Proteomes" id="UP000694722">
    <property type="component" value="Unplaced"/>
</dbReference>
<dbReference type="Proteomes" id="UP000694723">
    <property type="component" value="Unplaced"/>
</dbReference>
<dbReference type="Proteomes" id="UP000694724">
    <property type="component" value="Unplaced"/>
</dbReference>
<dbReference type="Proteomes" id="UP000694725">
    <property type="component" value="Unplaced"/>
</dbReference>
<dbReference type="Proteomes" id="UP000694726">
    <property type="component" value="Unplaced"/>
</dbReference>
<dbReference type="Proteomes" id="UP000694727">
    <property type="component" value="Unplaced"/>
</dbReference>
<dbReference type="Proteomes" id="UP000694728">
    <property type="component" value="Unplaced"/>
</dbReference>
<dbReference type="Bgee" id="ENSSSCG00000011538">
    <property type="expression patterns" value="Expressed in psoas major muscle and 45 other cell types or tissues"/>
</dbReference>
<dbReference type="ExpressionAtlas" id="Q5PXT2">
    <property type="expression patterns" value="baseline and differential"/>
</dbReference>
<dbReference type="GO" id="GO:0005737">
    <property type="term" value="C:cytoplasm"/>
    <property type="evidence" value="ECO:0007669"/>
    <property type="project" value="UniProtKB-SubCell"/>
</dbReference>
<dbReference type="GO" id="GO:0005634">
    <property type="term" value="C:nucleus"/>
    <property type="evidence" value="ECO:0000318"/>
    <property type="project" value="GO_Central"/>
</dbReference>
<dbReference type="GO" id="GO:0003714">
    <property type="term" value="F:transcription corepressor activity"/>
    <property type="evidence" value="ECO:0000250"/>
    <property type="project" value="UniProtKB"/>
</dbReference>
<dbReference type="GO" id="GO:0008270">
    <property type="term" value="F:zinc ion binding"/>
    <property type="evidence" value="ECO:0007669"/>
    <property type="project" value="InterPro"/>
</dbReference>
<dbReference type="GO" id="GO:0070886">
    <property type="term" value="P:positive regulation of calcineurin-NFAT signaling cascade"/>
    <property type="evidence" value="ECO:0000250"/>
    <property type="project" value="UniProtKB"/>
</dbReference>
<dbReference type="GO" id="GO:0010611">
    <property type="term" value="P:regulation of cardiac muscle hypertrophy"/>
    <property type="evidence" value="ECO:0000250"/>
    <property type="project" value="UniProtKB"/>
</dbReference>
<dbReference type="CDD" id="cd09340">
    <property type="entry name" value="LIM1_Testin_like"/>
    <property type="match status" value="1"/>
</dbReference>
<dbReference type="CDD" id="cd09829">
    <property type="entry name" value="PET_testin"/>
    <property type="match status" value="1"/>
</dbReference>
<dbReference type="FunFam" id="2.10.110.10:FF:000079">
    <property type="entry name" value="LIM and cysteine-rich domains protein 1"/>
    <property type="match status" value="1"/>
</dbReference>
<dbReference type="FunFam" id="2.10.110.10:FF:000005">
    <property type="entry name" value="Testin isoform 1"/>
    <property type="match status" value="1"/>
</dbReference>
<dbReference type="Gene3D" id="2.10.110.10">
    <property type="entry name" value="Cysteine Rich Protein"/>
    <property type="match status" value="2"/>
</dbReference>
<dbReference type="InterPro" id="IPR010442">
    <property type="entry name" value="PET_domain"/>
</dbReference>
<dbReference type="InterPro" id="IPR033724">
    <property type="entry name" value="PET_testin"/>
</dbReference>
<dbReference type="InterPro" id="IPR047120">
    <property type="entry name" value="Pk/Esn/Tes"/>
</dbReference>
<dbReference type="InterPro" id="IPR001781">
    <property type="entry name" value="Znf_LIM"/>
</dbReference>
<dbReference type="PANTHER" id="PTHR24211:SF0">
    <property type="entry name" value="LIM AND CYSTEINE-RICH DOMAINS PROTEIN 1"/>
    <property type="match status" value="1"/>
</dbReference>
<dbReference type="PANTHER" id="PTHR24211">
    <property type="entry name" value="LIM DOMAIN-CONTAINING PROTEIN"/>
    <property type="match status" value="1"/>
</dbReference>
<dbReference type="Pfam" id="PF00412">
    <property type="entry name" value="LIM"/>
    <property type="match status" value="2"/>
</dbReference>
<dbReference type="Pfam" id="PF06297">
    <property type="entry name" value="PET"/>
    <property type="match status" value="1"/>
</dbReference>
<dbReference type="SMART" id="SM00132">
    <property type="entry name" value="LIM"/>
    <property type="match status" value="2"/>
</dbReference>
<dbReference type="SUPFAM" id="SSF57716">
    <property type="entry name" value="Glucocorticoid receptor-like (DNA-binding domain)"/>
    <property type="match status" value="1"/>
</dbReference>
<dbReference type="PROSITE" id="PS00478">
    <property type="entry name" value="LIM_DOMAIN_1"/>
    <property type="match status" value="2"/>
</dbReference>
<dbReference type="PROSITE" id="PS50023">
    <property type="entry name" value="LIM_DOMAIN_2"/>
    <property type="match status" value="2"/>
</dbReference>
<dbReference type="PROSITE" id="PS51303">
    <property type="entry name" value="PET"/>
    <property type="match status" value="1"/>
</dbReference>
<organism>
    <name type="scientific">Sus scrofa</name>
    <name type="common">Pig</name>
    <dbReference type="NCBI Taxonomy" id="9823"/>
    <lineage>
        <taxon>Eukaryota</taxon>
        <taxon>Metazoa</taxon>
        <taxon>Chordata</taxon>
        <taxon>Craniata</taxon>
        <taxon>Vertebrata</taxon>
        <taxon>Euteleostomi</taxon>
        <taxon>Mammalia</taxon>
        <taxon>Eutheria</taxon>
        <taxon>Laurasiatheria</taxon>
        <taxon>Artiodactyla</taxon>
        <taxon>Suina</taxon>
        <taxon>Suidae</taxon>
        <taxon>Sus</taxon>
    </lineage>
</organism>